<sequence length="92" mass="10608">MTRSLKKNPFVAKHLLRKIEKLNTKAEKEIIITWSRASTIIPTMIGHTIAIHNGREHLPVYIIDLMVGHKLGEFSPTINFRGHAKNDNRSRR</sequence>
<protein>
    <recommendedName>
        <fullName evidence="1">Small ribosomal subunit protein uS19c</fullName>
    </recommendedName>
    <alternativeName>
        <fullName evidence="2">30S ribosomal protein S19, chloroplastic</fullName>
    </alternativeName>
</protein>
<organism>
    <name type="scientific">Nasturtium officinale</name>
    <name type="common">Watercress</name>
    <name type="synonym">Rorippa nasturtium-aquaticum</name>
    <dbReference type="NCBI Taxonomy" id="65948"/>
    <lineage>
        <taxon>Eukaryota</taxon>
        <taxon>Viridiplantae</taxon>
        <taxon>Streptophyta</taxon>
        <taxon>Embryophyta</taxon>
        <taxon>Tracheophyta</taxon>
        <taxon>Spermatophyta</taxon>
        <taxon>Magnoliopsida</taxon>
        <taxon>eudicotyledons</taxon>
        <taxon>Gunneridae</taxon>
        <taxon>Pentapetalae</taxon>
        <taxon>rosids</taxon>
        <taxon>malvids</taxon>
        <taxon>Brassicales</taxon>
        <taxon>Brassicaceae</taxon>
        <taxon>Cardamineae</taxon>
        <taxon>Nasturtium</taxon>
    </lineage>
</organism>
<feature type="chain" id="PRO_0000354365" description="Small ribosomal subunit protein uS19c">
    <location>
        <begin position="1"/>
        <end position="92"/>
    </location>
</feature>
<name>RR19_NASOF</name>
<keyword id="KW-0150">Chloroplast</keyword>
<keyword id="KW-0934">Plastid</keyword>
<keyword id="KW-0687">Ribonucleoprotein</keyword>
<keyword id="KW-0689">Ribosomal protein</keyword>
<keyword id="KW-0694">RNA-binding</keyword>
<keyword id="KW-0699">rRNA-binding</keyword>
<comment type="function">
    <text evidence="1">Protein S19 forms a complex with S13 that binds strongly to the 16S ribosomal RNA.</text>
</comment>
<comment type="subcellular location">
    <subcellularLocation>
        <location>Plastid</location>
        <location>Chloroplast</location>
    </subcellularLocation>
</comment>
<comment type="similarity">
    <text evidence="1">Belongs to the universal ribosomal protein uS19 family.</text>
</comment>
<reference key="1">
    <citation type="submission" date="2007-03" db="EMBL/GenBank/DDBJ databases">
        <title>Sequencing analysis of Nasturtium officinale chloroplast DNA.</title>
        <authorList>
            <person name="Hosouchi T."/>
            <person name="Tsuruoka H."/>
            <person name="Kotani H."/>
        </authorList>
    </citation>
    <scope>NUCLEOTIDE SEQUENCE [LARGE SCALE GENOMIC DNA]</scope>
</reference>
<accession>A4QLX3</accession>
<proteinExistence type="inferred from homology"/>
<geneLocation type="chloroplast"/>
<evidence type="ECO:0000255" key="1">
    <source>
        <dbReference type="HAMAP-Rule" id="MF_00531"/>
    </source>
</evidence>
<evidence type="ECO:0000305" key="2"/>
<gene>
    <name evidence="1" type="primary">rps19</name>
</gene>
<dbReference type="EMBL" id="AP009376">
    <property type="protein sequence ID" value="BAF50678.1"/>
    <property type="molecule type" value="Genomic_DNA"/>
</dbReference>
<dbReference type="RefSeq" id="YP_001123854.1">
    <property type="nucleotide sequence ID" value="NC_009275.1"/>
</dbReference>
<dbReference type="SMR" id="A4QLX3"/>
<dbReference type="GeneID" id="4962102"/>
<dbReference type="GO" id="GO:0009507">
    <property type="term" value="C:chloroplast"/>
    <property type="evidence" value="ECO:0007669"/>
    <property type="project" value="UniProtKB-SubCell"/>
</dbReference>
<dbReference type="GO" id="GO:0005763">
    <property type="term" value="C:mitochondrial small ribosomal subunit"/>
    <property type="evidence" value="ECO:0007669"/>
    <property type="project" value="TreeGrafter"/>
</dbReference>
<dbReference type="GO" id="GO:0019843">
    <property type="term" value="F:rRNA binding"/>
    <property type="evidence" value="ECO:0007669"/>
    <property type="project" value="UniProtKB-UniRule"/>
</dbReference>
<dbReference type="GO" id="GO:0003735">
    <property type="term" value="F:structural constituent of ribosome"/>
    <property type="evidence" value="ECO:0007669"/>
    <property type="project" value="InterPro"/>
</dbReference>
<dbReference type="GO" id="GO:0000028">
    <property type="term" value="P:ribosomal small subunit assembly"/>
    <property type="evidence" value="ECO:0007669"/>
    <property type="project" value="TreeGrafter"/>
</dbReference>
<dbReference type="GO" id="GO:0006412">
    <property type="term" value="P:translation"/>
    <property type="evidence" value="ECO:0007669"/>
    <property type="project" value="UniProtKB-UniRule"/>
</dbReference>
<dbReference type="FunFam" id="3.30.860.10:FF:000001">
    <property type="entry name" value="30S ribosomal protein S19"/>
    <property type="match status" value="1"/>
</dbReference>
<dbReference type="Gene3D" id="3.30.860.10">
    <property type="entry name" value="30s Ribosomal Protein S19, Chain A"/>
    <property type="match status" value="1"/>
</dbReference>
<dbReference type="HAMAP" id="MF_00531">
    <property type="entry name" value="Ribosomal_uS19"/>
    <property type="match status" value="1"/>
</dbReference>
<dbReference type="InterPro" id="IPR002222">
    <property type="entry name" value="Ribosomal_uS19"/>
</dbReference>
<dbReference type="InterPro" id="IPR005732">
    <property type="entry name" value="Ribosomal_uS19_bac-type"/>
</dbReference>
<dbReference type="InterPro" id="IPR020934">
    <property type="entry name" value="Ribosomal_uS19_CS"/>
</dbReference>
<dbReference type="InterPro" id="IPR023575">
    <property type="entry name" value="Ribosomal_uS19_SF"/>
</dbReference>
<dbReference type="NCBIfam" id="TIGR01050">
    <property type="entry name" value="rpsS_bact"/>
    <property type="match status" value="1"/>
</dbReference>
<dbReference type="PANTHER" id="PTHR11880">
    <property type="entry name" value="RIBOSOMAL PROTEIN S19P FAMILY MEMBER"/>
    <property type="match status" value="1"/>
</dbReference>
<dbReference type="PANTHER" id="PTHR11880:SF8">
    <property type="entry name" value="SMALL RIBOSOMAL SUBUNIT PROTEIN US19M"/>
    <property type="match status" value="1"/>
</dbReference>
<dbReference type="Pfam" id="PF00203">
    <property type="entry name" value="Ribosomal_S19"/>
    <property type="match status" value="1"/>
</dbReference>
<dbReference type="PIRSF" id="PIRSF002144">
    <property type="entry name" value="Ribosomal_S19"/>
    <property type="match status" value="1"/>
</dbReference>
<dbReference type="PRINTS" id="PR00975">
    <property type="entry name" value="RIBOSOMALS19"/>
</dbReference>
<dbReference type="SUPFAM" id="SSF54570">
    <property type="entry name" value="Ribosomal protein S19"/>
    <property type="match status" value="1"/>
</dbReference>
<dbReference type="PROSITE" id="PS00323">
    <property type="entry name" value="RIBOSOMAL_S19"/>
    <property type="match status" value="1"/>
</dbReference>